<name>UBA1_DICDI</name>
<reference key="1">
    <citation type="journal article" date="2005" name="Nature">
        <title>The genome of the social amoeba Dictyostelium discoideum.</title>
        <authorList>
            <person name="Eichinger L."/>
            <person name="Pachebat J.A."/>
            <person name="Gloeckner G."/>
            <person name="Rajandream M.A."/>
            <person name="Sucgang R."/>
            <person name="Berriman M."/>
            <person name="Song J."/>
            <person name="Olsen R."/>
            <person name="Szafranski K."/>
            <person name="Xu Q."/>
            <person name="Tunggal B."/>
            <person name="Kummerfeld S."/>
            <person name="Madera M."/>
            <person name="Konfortov B.A."/>
            <person name="Rivero F."/>
            <person name="Bankier A.T."/>
            <person name="Lehmann R."/>
            <person name="Hamlin N."/>
            <person name="Davies R."/>
            <person name="Gaudet P."/>
            <person name="Fey P."/>
            <person name="Pilcher K."/>
            <person name="Chen G."/>
            <person name="Saunders D."/>
            <person name="Sodergren E.J."/>
            <person name="Davis P."/>
            <person name="Kerhornou A."/>
            <person name="Nie X."/>
            <person name="Hall N."/>
            <person name="Anjard C."/>
            <person name="Hemphill L."/>
            <person name="Bason N."/>
            <person name="Farbrother P."/>
            <person name="Desany B."/>
            <person name="Just E."/>
            <person name="Morio T."/>
            <person name="Rost R."/>
            <person name="Churcher C.M."/>
            <person name="Cooper J."/>
            <person name="Haydock S."/>
            <person name="van Driessche N."/>
            <person name="Cronin A."/>
            <person name="Goodhead I."/>
            <person name="Muzny D.M."/>
            <person name="Mourier T."/>
            <person name="Pain A."/>
            <person name="Lu M."/>
            <person name="Harper D."/>
            <person name="Lindsay R."/>
            <person name="Hauser H."/>
            <person name="James K.D."/>
            <person name="Quiles M."/>
            <person name="Madan Babu M."/>
            <person name="Saito T."/>
            <person name="Buchrieser C."/>
            <person name="Wardroper A."/>
            <person name="Felder M."/>
            <person name="Thangavelu M."/>
            <person name="Johnson D."/>
            <person name="Knights A."/>
            <person name="Loulseged H."/>
            <person name="Mungall K.L."/>
            <person name="Oliver K."/>
            <person name="Price C."/>
            <person name="Quail M.A."/>
            <person name="Urushihara H."/>
            <person name="Hernandez J."/>
            <person name="Rabbinowitsch E."/>
            <person name="Steffen D."/>
            <person name="Sanders M."/>
            <person name="Ma J."/>
            <person name="Kohara Y."/>
            <person name="Sharp S."/>
            <person name="Simmonds M.N."/>
            <person name="Spiegler S."/>
            <person name="Tivey A."/>
            <person name="Sugano S."/>
            <person name="White B."/>
            <person name="Walker D."/>
            <person name="Woodward J.R."/>
            <person name="Winckler T."/>
            <person name="Tanaka Y."/>
            <person name="Shaulsky G."/>
            <person name="Schleicher M."/>
            <person name="Weinstock G.M."/>
            <person name="Rosenthal A."/>
            <person name="Cox E.C."/>
            <person name="Chisholm R.L."/>
            <person name="Gibbs R.A."/>
            <person name="Loomis W.F."/>
            <person name="Platzer M."/>
            <person name="Kay R.R."/>
            <person name="Williams J.G."/>
            <person name="Dear P.H."/>
            <person name="Noegel A.A."/>
            <person name="Barrell B.G."/>
            <person name="Kuspa A."/>
        </authorList>
    </citation>
    <scope>NUCLEOTIDE SEQUENCE [LARGE SCALE GENOMIC DNA]</scope>
    <source>
        <strain>AX4</strain>
    </source>
</reference>
<evidence type="ECO:0000250" key="1"/>
<evidence type="ECO:0000250" key="2">
    <source>
        <dbReference type="UniProtKB" id="P22515"/>
    </source>
</evidence>
<evidence type="ECO:0000255" key="3">
    <source>
        <dbReference type="PROSITE-ProRule" id="PRU10132"/>
    </source>
</evidence>
<evidence type="ECO:0000256" key="4">
    <source>
        <dbReference type="SAM" id="MobiDB-lite"/>
    </source>
</evidence>
<evidence type="ECO:0000305" key="5"/>
<comment type="function">
    <text evidence="2">Catalyzes the first step in ubiquitin conjugation to mark cellular proteins for degradation through the ubiquitin-proteasome system. Activates ubiquitin by first adenylating its C-terminal glycine residue with ATP, and thereafter linking this residue to the side chain of a cysteine residue in E1, yielding a ubiquitin-E1 thioester and free AMP.</text>
</comment>
<comment type="catalytic activity">
    <reaction evidence="2">
        <text>ATP + ubiquitin + [E1 ubiquitin-activating enzyme]-L-cysteine = AMP + diphosphate + S-ubiquitinyl-[E1 ubiquitin-activating enzyme]-L-cysteine.</text>
        <dbReference type="EC" id="6.2.1.45"/>
    </reaction>
</comment>
<comment type="pathway">
    <text evidence="2">Protein modification; protein ubiquitination.</text>
</comment>
<comment type="subunit">
    <text evidence="1">Monomer.</text>
</comment>
<comment type="miscellaneous">
    <text evidence="2">There are two active sites within the E1 molecule, allowing it to accommodate two ubiquitin moieties at a time, with a new ubiquitin forming an adenylate intermediate as the previous one is transferred to the thiol site.</text>
</comment>
<comment type="similarity">
    <text evidence="5">Belongs to the ubiquitin-activating E1 family.</text>
</comment>
<accession>Q55C16</accession>
<gene>
    <name type="primary">uba1</name>
    <name type="synonym">uae1</name>
    <name type="ORF">DDB_G0270272</name>
</gene>
<organism>
    <name type="scientific">Dictyostelium discoideum</name>
    <name type="common">Social amoeba</name>
    <dbReference type="NCBI Taxonomy" id="44689"/>
    <lineage>
        <taxon>Eukaryota</taxon>
        <taxon>Amoebozoa</taxon>
        <taxon>Evosea</taxon>
        <taxon>Eumycetozoa</taxon>
        <taxon>Dictyostelia</taxon>
        <taxon>Dictyosteliales</taxon>
        <taxon>Dictyosteliaceae</taxon>
        <taxon>Dictyostelium</taxon>
    </lineage>
</organism>
<dbReference type="EC" id="6.2.1.45" evidence="2"/>
<dbReference type="EMBL" id="AAFI02000005">
    <property type="protein sequence ID" value="EAL72486.1"/>
    <property type="molecule type" value="Genomic_DNA"/>
</dbReference>
<dbReference type="RefSeq" id="XP_646665.1">
    <property type="nucleotide sequence ID" value="XM_641573.1"/>
</dbReference>
<dbReference type="SMR" id="Q55C16"/>
<dbReference type="FunCoup" id="Q55C16">
    <property type="interactions" value="1252"/>
</dbReference>
<dbReference type="STRING" id="44689.Q55C16"/>
<dbReference type="PaxDb" id="44689-DDB0220497"/>
<dbReference type="EnsemblProtists" id="EAL72486">
    <property type="protein sequence ID" value="EAL72486"/>
    <property type="gene ID" value="DDB_G0270272"/>
</dbReference>
<dbReference type="GeneID" id="8617637"/>
<dbReference type="KEGG" id="ddi:DDB_G0270272"/>
<dbReference type="dictyBase" id="DDB_G0270272">
    <property type="gene designation" value="uae1"/>
</dbReference>
<dbReference type="VEuPathDB" id="AmoebaDB:DDB_G0270272"/>
<dbReference type="eggNOG" id="KOG2012">
    <property type="taxonomic scope" value="Eukaryota"/>
</dbReference>
<dbReference type="HOGENOM" id="CLU_002556_0_0_1"/>
<dbReference type="InParanoid" id="Q55C16"/>
<dbReference type="OMA" id="AGRHKVE"/>
<dbReference type="PhylomeDB" id="Q55C16"/>
<dbReference type="Reactome" id="R-DDI-1169408">
    <property type="pathway name" value="ISG15 antiviral mechanism"/>
</dbReference>
<dbReference type="Reactome" id="R-DDI-8866652">
    <property type="pathway name" value="Synthesis of active ubiquitin: roles of E1 and E2 enzymes"/>
</dbReference>
<dbReference type="Reactome" id="R-DDI-936440">
    <property type="pathway name" value="Negative regulators of DDX58/IFIH1 signaling"/>
</dbReference>
<dbReference type="Reactome" id="R-DDI-983168">
    <property type="pathway name" value="Antigen processing: Ubiquitination &amp; Proteasome degradation"/>
</dbReference>
<dbReference type="Reactome" id="R-DDI-9909505">
    <property type="pathway name" value="Modulation of host responses by IFN-stimulated genes"/>
</dbReference>
<dbReference type="UniPathway" id="UPA00143"/>
<dbReference type="PRO" id="PR:Q55C16"/>
<dbReference type="Proteomes" id="UP000002195">
    <property type="component" value="Chromosome 1"/>
</dbReference>
<dbReference type="GO" id="GO:0005813">
    <property type="term" value="C:centrosome"/>
    <property type="evidence" value="ECO:0000304"/>
    <property type="project" value="dictyBase"/>
</dbReference>
<dbReference type="GO" id="GO:0005737">
    <property type="term" value="C:cytoplasm"/>
    <property type="evidence" value="ECO:0000318"/>
    <property type="project" value="GO_Central"/>
</dbReference>
<dbReference type="GO" id="GO:0005634">
    <property type="term" value="C:nucleus"/>
    <property type="evidence" value="ECO:0000318"/>
    <property type="project" value="GO_Central"/>
</dbReference>
<dbReference type="GO" id="GO:0005524">
    <property type="term" value="F:ATP binding"/>
    <property type="evidence" value="ECO:0007669"/>
    <property type="project" value="UniProtKB-KW"/>
</dbReference>
<dbReference type="GO" id="GO:0004839">
    <property type="term" value="F:ubiquitin activating enzyme activity"/>
    <property type="evidence" value="ECO:0000318"/>
    <property type="project" value="GO_Central"/>
</dbReference>
<dbReference type="GO" id="GO:0006974">
    <property type="term" value="P:DNA damage response"/>
    <property type="evidence" value="ECO:0000318"/>
    <property type="project" value="GO_Central"/>
</dbReference>
<dbReference type="GO" id="GO:0016567">
    <property type="term" value="P:protein ubiquitination"/>
    <property type="evidence" value="ECO:0000318"/>
    <property type="project" value="GO_Central"/>
</dbReference>
<dbReference type="GO" id="GO:0006511">
    <property type="term" value="P:ubiquitin-dependent protein catabolic process"/>
    <property type="evidence" value="ECO:0000318"/>
    <property type="project" value="GO_Central"/>
</dbReference>
<dbReference type="CDD" id="cd01490">
    <property type="entry name" value="Ube1_repeat2"/>
    <property type="match status" value="1"/>
</dbReference>
<dbReference type="FunFam" id="3.50.50.80:FF:000002">
    <property type="entry name" value="SUMO-activating enzyme subunit 2"/>
    <property type="match status" value="1"/>
</dbReference>
<dbReference type="FunFam" id="3.50.50.80:FF:000007">
    <property type="entry name" value="Ubiquitin-activating enzyme E1"/>
    <property type="match status" value="1"/>
</dbReference>
<dbReference type="FunFam" id="1.10.10.2660:FF:000001">
    <property type="entry name" value="Ubiquitin-activating enzyme E1 1"/>
    <property type="match status" value="1"/>
</dbReference>
<dbReference type="FunFam" id="3.40.50.720:FF:000015">
    <property type="entry name" value="Ubiquitin-activating enzyme E1 1"/>
    <property type="match status" value="1"/>
</dbReference>
<dbReference type="FunFam" id="3.10.290.60:FF:000001">
    <property type="entry name" value="Ubiquitin-activating enzyme E1 2"/>
    <property type="match status" value="1"/>
</dbReference>
<dbReference type="FunFam" id="2.40.30.180:FF:000001">
    <property type="entry name" value="ubiquitin-like modifier-activating enzyme 1"/>
    <property type="match status" value="1"/>
</dbReference>
<dbReference type="Gene3D" id="3.40.50.720">
    <property type="entry name" value="NAD(P)-binding Rossmann-like Domain"/>
    <property type="match status" value="1"/>
</dbReference>
<dbReference type="Gene3D" id="2.40.30.180">
    <property type="entry name" value="Ubiquitin-activating enzyme E1, FCCH domain"/>
    <property type="match status" value="1"/>
</dbReference>
<dbReference type="Gene3D" id="3.50.50.80">
    <property type="entry name" value="Ubiquitin-activating enzyme E1, inactive adenylation domain, subdomain 1"/>
    <property type="match status" value="1"/>
</dbReference>
<dbReference type="Gene3D" id="3.40.50.12550">
    <property type="entry name" value="Ubiquitin-activating enzyme E1, inactive adenylation domain, subdomain 2"/>
    <property type="match status" value="1"/>
</dbReference>
<dbReference type="Gene3D" id="1.10.10.2660">
    <property type="entry name" value="Ubiquitin-activating enzyme E1, SCCH domain"/>
    <property type="match status" value="1"/>
</dbReference>
<dbReference type="Gene3D" id="3.10.290.60">
    <property type="entry name" value="Ubiquitin-activating enzyme E1, UFD domain"/>
    <property type="match status" value="1"/>
</dbReference>
<dbReference type="InterPro" id="IPR032420">
    <property type="entry name" value="E1_4HB"/>
</dbReference>
<dbReference type="InterPro" id="IPR032418">
    <property type="entry name" value="E1_FCCH"/>
</dbReference>
<dbReference type="InterPro" id="IPR042302">
    <property type="entry name" value="E1_FCCH_sf"/>
</dbReference>
<dbReference type="InterPro" id="IPR045886">
    <property type="entry name" value="ThiF/MoeB/HesA"/>
</dbReference>
<dbReference type="InterPro" id="IPR000594">
    <property type="entry name" value="ThiF_NAD_FAD-bd"/>
</dbReference>
<dbReference type="InterPro" id="IPR018965">
    <property type="entry name" value="Ub-activating_enz_E1_C"/>
</dbReference>
<dbReference type="InterPro" id="IPR042449">
    <property type="entry name" value="Ub-E1_IAD_1"/>
</dbReference>
<dbReference type="InterPro" id="IPR038252">
    <property type="entry name" value="UBA_E1_C_sf"/>
</dbReference>
<dbReference type="InterPro" id="IPR019572">
    <property type="entry name" value="UBA_E1_SCCH"/>
</dbReference>
<dbReference type="InterPro" id="IPR042063">
    <property type="entry name" value="Ubi_acti_E1_SCCH"/>
</dbReference>
<dbReference type="InterPro" id="IPR035985">
    <property type="entry name" value="Ubiquitin-activating_enz"/>
</dbReference>
<dbReference type="InterPro" id="IPR018075">
    <property type="entry name" value="UBQ-activ_enz_E1"/>
</dbReference>
<dbReference type="InterPro" id="IPR018074">
    <property type="entry name" value="UBQ-activ_enz_E1_CS"/>
</dbReference>
<dbReference type="InterPro" id="IPR033127">
    <property type="entry name" value="UBQ-activ_enz_E1_Cys_AS"/>
</dbReference>
<dbReference type="InterPro" id="IPR000011">
    <property type="entry name" value="UBQ/SUMO-activ_enz_E1-like"/>
</dbReference>
<dbReference type="NCBIfam" id="TIGR01408">
    <property type="entry name" value="Ube1"/>
    <property type="match status" value="1"/>
</dbReference>
<dbReference type="PANTHER" id="PTHR10953:SF162">
    <property type="entry name" value="SUMO-ACTIVATING ENZYME SUBUNIT 1"/>
    <property type="match status" value="1"/>
</dbReference>
<dbReference type="PANTHER" id="PTHR10953">
    <property type="entry name" value="UBIQUITIN-ACTIVATING ENZYME E1"/>
    <property type="match status" value="1"/>
</dbReference>
<dbReference type="Pfam" id="PF16191">
    <property type="entry name" value="E1_4HB"/>
    <property type="match status" value="1"/>
</dbReference>
<dbReference type="Pfam" id="PF16190">
    <property type="entry name" value="E1_FCCH"/>
    <property type="match status" value="1"/>
</dbReference>
<dbReference type="Pfam" id="PF09358">
    <property type="entry name" value="E1_UFD"/>
    <property type="match status" value="1"/>
</dbReference>
<dbReference type="Pfam" id="PF00899">
    <property type="entry name" value="ThiF"/>
    <property type="match status" value="2"/>
</dbReference>
<dbReference type="Pfam" id="PF10585">
    <property type="entry name" value="UBA_E1_SCCH"/>
    <property type="match status" value="1"/>
</dbReference>
<dbReference type="PRINTS" id="PR01849">
    <property type="entry name" value="UBIQUITINACT"/>
</dbReference>
<dbReference type="SMART" id="SM00985">
    <property type="entry name" value="UBA_e1_C"/>
    <property type="match status" value="1"/>
</dbReference>
<dbReference type="SUPFAM" id="SSF69572">
    <property type="entry name" value="Activating enzymes of the ubiquitin-like proteins"/>
    <property type="match status" value="2"/>
</dbReference>
<dbReference type="PROSITE" id="PS00536">
    <property type="entry name" value="UBIQUITIN_ACTIVAT_1"/>
    <property type="match status" value="1"/>
</dbReference>
<dbReference type="PROSITE" id="PS00865">
    <property type="entry name" value="UBIQUITIN_ACTIVAT_2"/>
    <property type="match status" value="1"/>
</dbReference>
<protein>
    <recommendedName>
        <fullName>Ubiquitin-like modifier-activating enzyme 1</fullName>
        <ecNumber evidence="2">6.2.1.45</ecNumber>
    </recommendedName>
    <alternativeName>
        <fullName>Ubiquitin-activating enzyme E1</fullName>
    </alternativeName>
</protein>
<sequence length="1017" mass="113745">MSKPMDVEQEPKIDDALYSRQLYALSHETMKKITSTSVLVVGLQGLGIEIVKDLSLAGVKSVTLYDKELVEIKDLSSQFYFSPEQVGKVGRADACFQKVVDLNNYVRIDVHNGELSDEFLKKFNVVVLANQPLALQLKVNEFCHANKIHFISVETRGVFGQLFNDFGEQFTITDTNGENPNAYMISSISQDKEGIVTVVEEQKLQLLDGDLVTFKEVNGMSALNDLPPQKIKTISPLTFSIGDTTNLPPYTSGGYVTEVKQPKVVDFKPLKNILESGENIFITDDFKFTQPTNLLAGFQAIHKFAEKNKHMPRPHNKEDANAVIEIAKGLLKKPDDELDEKMITQLSFGAQGDIVPMQAILGGITAQEVLKACSGKFTPIHQLAFFDSVECLPEDLETLPEEEFQPIGSRYDGQIITFGKTLQNKIENLNYFLVGAGAIGCEMLKNFAMMGLGAGPKGLVHVTDMDTIEKSNLNRQFLFRSSDIQQLKSQTAANAVRVMNPDLNVKAYSLRVGPDTESHYNEEFFNSLDGVCNALDNVEARLYMDSQCVYYGKPLLESGTLGTKGNTQVVVPHLTESYSSSRDPPEKGIPVCTLHNFPNAIEHTIQWARDTFEGLFKNNADNVNSYLTNPAYVQSLKTQNPFVRLETLASIKASLMDRPLDFNQCIAWARLKFEEYFNNNIEQLLYNFPKDMVTTTGTPFWSGPKRAPTPLKFDVENPLHLEFIVAAANLRAFNYGIKAETNIEVIQKQAANVIVPDFTPKKVKIQTSENEPAPSSNTQQAGGDAEDDQCDTILSQLPQPSEMAGYKINSIQFEKDDDTNHHIDFITATSNLRATNYAISPADKHKTKGIAGKIIPALVTTTAVVAGFVCIELIKVIQNKALEKYKSTFMNLGIPFFGFVEPIAAPKNKIREGWTWTLWDRFDVDGDITLKEFLDLFEKKHGLDISMLSCKVTLLYALFTDKKTKEERLKMKISQLYETLSKKPLPKDKKYLLLEICCNDTETGDDVDVPSVRYKYN</sequence>
<feature type="chain" id="PRO_0000328363" description="Ubiquitin-like modifier-activating enzyme 1">
    <location>
        <begin position="1"/>
        <end position="1017"/>
    </location>
</feature>
<feature type="repeat" description="1-1">
    <location>
        <begin position="26"/>
        <end position="163"/>
    </location>
</feature>
<feature type="repeat" description="1-2">
    <location>
        <begin position="419"/>
        <end position="571"/>
    </location>
</feature>
<feature type="region of interest" description="2 approximate repeats" evidence="1">
    <location>
        <begin position="26"/>
        <end position="571"/>
    </location>
</feature>
<feature type="region of interest" description="Disordered" evidence="4">
    <location>
        <begin position="765"/>
        <end position="788"/>
    </location>
</feature>
<feature type="compositionally biased region" description="Polar residues" evidence="4">
    <location>
        <begin position="765"/>
        <end position="781"/>
    </location>
</feature>
<feature type="active site" description="Glycyl thioester intermediate" evidence="3">
    <location>
        <position position="592"/>
    </location>
</feature>
<feature type="binding site" evidence="2">
    <location>
        <position position="438"/>
    </location>
    <ligand>
        <name>ATP</name>
        <dbReference type="ChEBI" id="CHEBI:30616"/>
    </ligand>
</feature>
<feature type="binding site" evidence="2">
    <location>
        <position position="464"/>
    </location>
    <ligand>
        <name>ATP</name>
        <dbReference type="ChEBI" id="CHEBI:30616"/>
    </ligand>
</feature>
<feature type="binding site" evidence="2">
    <location>
        <position position="475"/>
    </location>
    <ligand>
        <name>ATP</name>
        <dbReference type="ChEBI" id="CHEBI:30616"/>
    </ligand>
</feature>
<feature type="binding site" evidence="2">
    <location>
        <position position="488"/>
    </location>
    <ligand>
        <name>ATP</name>
        <dbReference type="ChEBI" id="CHEBI:30616"/>
    </ligand>
</feature>
<feature type="binding site" evidence="2">
    <location>
        <begin position="536"/>
        <end position="537"/>
    </location>
    <ligand>
        <name>ATP</name>
        <dbReference type="ChEBI" id="CHEBI:30616"/>
    </ligand>
</feature>
<proteinExistence type="inferred from homology"/>
<keyword id="KW-0067">ATP-binding</keyword>
<keyword id="KW-0436">Ligase</keyword>
<keyword id="KW-0547">Nucleotide-binding</keyword>
<keyword id="KW-1185">Reference proteome</keyword>
<keyword id="KW-0677">Repeat</keyword>
<keyword id="KW-0833">Ubl conjugation pathway</keyword>